<evidence type="ECO:0000250" key="1"/>
<evidence type="ECO:0000250" key="2">
    <source>
        <dbReference type="UniProtKB" id="O75781"/>
    </source>
</evidence>
<evidence type="ECO:0000250" key="3">
    <source>
        <dbReference type="UniProtKB" id="Q920Q0"/>
    </source>
</evidence>
<evidence type="ECO:0000255" key="4"/>
<evidence type="ECO:0000256" key="5">
    <source>
        <dbReference type="SAM" id="MobiDB-lite"/>
    </source>
</evidence>
<evidence type="ECO:0000269" key="6">
    <source>
    </source>
</evidence>
<evidence type="ECO:0000269" key="7">
    <source>
    </source>
</evidence>
<evidence type="ECO:0000303" key="8">
    <source>
    </source>
</evidence>
<evidence type="ECO:0000305" key="9"/>
<evidence type="ECO:0007744" key="10">
    <source>
    </source>
</evidence>
<evidence type="ECO:0007744" key="11">
    <source>
    </source>
</evidence>
<evidence type="ECO:0007744" key="12">
    <source>
    </source>
</evidence>
<dbReference type="EMBL" id="Y14771">
    <property type="protein sequence ID" value="CAB37403.1"/>
    <property type="molecule type" value="mRNA"/>
</dbReference>
<dbReference type="EMBL" id="Y14771">
    <property type="protein sequence ID" value="CAB37404.1"/>
    <property type="molecule type" value="mRNA"/>
</dbReference>
<dbReference type="CCDS" id="CCDS23991.1">
    <molecule id="Q9Z0P4-1"/>
</dbReference>
<dbReference type="CCDS" id="CCDS48621.1">
    <molecule id="Q9Z0P4-2"/>
</dbReference>
<dbReference type="RefSeq" id="NP_001155219.1">
    <molecule id="Q9Z0P4-2"/>
    <property type="nucleotide sequence ID" value="NM_001161747.1"/>
</dbReference>
<dbReference type="RefSeq" id="NP_075617.3">
    <molecule id="Q9Z0P4-1"/>
    <property type="nucleotide sequence ID" value="NM_023128.4"/>
</dbReference>
<dbReference type="SMR" id="Q9Z0P4"/>
<dbReference type="BioGRID" id="202022">
    <property type="interactions" value="13"/>
</dbReference>
<dbReference type="FunCoup" id="Q9Z0P4">
    <property type="interactions" value="503"/>
</dbReference>
<dbReference type="STRING" id="10090.ENSMUSP00000040596"/>
<dbReference type="GlyGen" id="Q9Z0P4">
    <property type="glycosylation" value="4 sites, 1 N-linked glycan (1 site), 1 O-linked glycan (3 sites)"/>
</dbReference>
<dbReference type="iPTMnet" id="Q9Z0P4"/>
<dbReference type="PhosphoSitePlus" id="Q9Z0P4"/>
<dbReference type="SwissPalm" id="Q9Z0P4"/>
<dbReference type="jPOST" id="Q9Z0P4"/>
<dbReference type="PaxDb" id="10090-ENSMUSP00000040596"/>
<dbReference type="PeptideAtlas" id="Q9Z0P4"/>
<dbReference type="ProteomicsDB" id="294324">
    <molecule id="Q9Z0P4-1"/>
</dbReference>
<dbReference type="ProteomicsDB" id="294325">
    <molecule id="Q9Z0P4-2"/>
</dbReference>
<dbReference type="Pumba" id="Q9Z0P4"/>
<dbReference type="Antibodypedia" id="22365">
    <property type="antibodies" value="96 antibodies from 21 providers"/>
</dbReference>
<dbReference type="Ensembl" id="ENSMUST00000046945.13">
    <molecule id="Q9Z0P4-1"/>
    <property type="protein sequence ID" value="ENSMUSP00000040596.7"/>
    <property type="gene ID" value="ENSMUSG00000035863.15"/>
</dbReference>
<dbReference type="Ensembl" id="ENSMUST00000105379.3">
    <molecule id="Q9Z0P4-2"/>
    <property type="protein sequence ID" value="ENSMUSP00000101018.3"/>
    <property type="gene ID" value="ENSMUSG00000035863.15"/>
</dbReference>
<dbReference type="GeneID" id="18483"/>
<dbReference type="KEGG" id="mmu:18483"/>
<dbReference type="UCSC" id="uc007fzw.2">
    <molecule id="Q9Z0P4-1"/>
    <property type="organism name" value="mouse"/>
</dbReference>
<dbReference type="AGR" id="MGI:1261814"/>
<dbReference type="CTD" id="5064"/>
<dbReference type="MGI" id="MGI:1261814">
    <property type="gene designation" value="Palm"/>
</dbReference>
<dbReference type="VEuPathDB" id="HostDB:ENSMUSG00000035863"/>
<dbReference type="eggNOG" id="ENOG502QQ2W">
    <property type="taxonomic scope" value="Eukaryota"/>
</dbReference>
<dbReference type="GeneTree" id="ENSGT00940000160580"/>
<dbReference type="HOGENOM" id="CLU_038333_2_0_1"/>
<dbReference type="InParanoid" id="Q9Z0P4"/>
<dbReference type="OMA" id="XMYSVEI"/>
<dbReference type="OrthoDB" id="9934905at2759"/>
<dbReference type="PhylomeDB" id="Q9Z0P4"/>
<dbReference type="TreeFam" id="TF105402"/>
<dbReference type="BioGRID-ORCS" id="18483">
    <property type="hits" value="3 hits in 77 CRISPR screens"/>
</dbReference>
<dbReference type="CD-CODE" id="CE726F99">
    <property type="entry name" value="Postsynaptic density"/>
</dbReference>
<dbReference type="ChiTaRS" id="Palm">
    <property type="organism name" value="mouse"/>
</dbReference>
<dbReference type="PRO" id="PR:Q9Z0P4"/>
<dbReference type="Proteomes" id="UP000000589">
    <property type="component" value="Chromosome 10"/>
</dbReference>
<dbReference type="RNAct" id="Q9Z0P4">
    <property type="molecule type" value="protein"/>
</dbReference>
<dbReference type="Bgee" id="ENSMUSG00000035863">
    <property type="expression patterns" value="Expressed in embryonic brain and 233 other cell types or tissues"/>
</dbReference>
<dbReference type="ExpressionAtlas" id="Q9Z0P4">
    <property type="expression patterns" value="baseline and differential"/>
</dbReference>
<dbReference type="GO" id="GO:0016327">
    <property type="term" value="C:apicolateral plasma membrane"/>
    <property type="evidence" value="ECO:0007669"/>
    <property type="project" value="UniProtKB-SubCell"/>
</dbReference>
<dbReference type="GO" id="GO:0030424">
    <property type="term" value="C:axon"/>
    <property type="evidence" value="ECO:0007669"/>
    <property type="project" value="UniProtKB-SubCell"/>
</dbReference>
<dbReference type="GO" id="GO:0016323">
    <property type="term" value="C:basolateral plasma membrane"/>
    <property type="evidence" value="ECO:0007669"/>
    <property type="project" value="UniProtKB-SubCell"/>
</dbReference>
<dbReference type="GO" id="GO:0005737">
    <property type="term" value="C:cytoplasm"/>
    <property type="evidence" value="ECO:0000314"/>
    <property type="project" value="MGI"/>
</dbReference>
<dbReference type="GO" id="GO:0043197">
    <property type="term" value="C:dendritic spine"/>
    <property type="evidence" value="ECO:0007669"/>
    <property type="project" value="UniProtKB-SubCell"/>
</dbReference>
<dbReference type="GO" id="GO:0030175">
    <property type="term" value="C:filopodium"/>
    <property type="evidence" value="ECO:0000314"/>
    <property type="project" value="UniProtKB"/>
</dbReference>
<dbReference type="GO" id="GO:0031527">
    <property type="term" value="C:filopodium membrane"/>
    <property type="evidence" value="ECO:0007669"/>
    <property type="project" value="UniProtKB-SubCell"/>
</dbReference>
<dbReference type="GO" id="GO:0044309">
    <property type="term" value="C:neuron spine"/>
    <property type="evidence" value="ECO:0000314"/>
    <property type="project" value="UniProtKB"/>
</dbReference>
<dbReference type="GO" id="GO:0005654">
    <property type="term" value="C:nucleoplasm"/>
    <property type="evidence" value="ECO:0007669"/>
    <property type="project" value="Ensembl"/>
</dbReference>
<dbReference type="GO" id="GO:0005886">
    <property type="term" value="C:plasma membrane"/>
    <property type="evidence" value="ECO:0000314"/>
    <property type="project" value="UniProtKB"/>
</dbReference>
<dbReference type="GO" id="GO:0014069">
    <property type="term" value="C:postsynaptic density"/>
    <property type="evidence" value="ECO:0000314"/>
    <property type="project" value="MGI"/>
</dbReference>
<dbReference type="GO" id="GO:0031750">
    <property type="term" value="F:D3 dopamine receptor binding"/>
    <property type="evidence" value="ECO:0000353"/>
    <property type="project" value="MGI"/>
</dbReference>
<dbReference type="GO" id="GO:0007193">
    <property type="term" value="P:adenylate cyclase-inhibiting G protein-coupled receptor signaling pathway"/>
    <property type="evidence" value="ECO:0000314"/>
    <property type="project" value="MGI"/>
</dbReference>
<dbReference type="GO" id="GO:0071257">
    <property type="term" value="P:cellular response to electrical stimulus"/>
    <property type="evidence" value="ECO:0000314"/>
    <property type="project" value="UniProtKB"/>
</dbReference>
<dbReference type="GO" id="GO:0007010">
    <property type="term" value="P:cytoskeleton organization"/>
    <property type="evidence" value="ECO:0000314"/>
    <property type="project" value="MGI"/>
</dbReference>
<dbReference type="GO" id="GO:0060160">
    <property type="term" value="P:negative regulation of dopamine receptor signaling pathway"/>
    <property type="evidence" value="ECO:0007669"/>
    <property type="project" value="Ensembl"/>
</dbReference>
<dbReference type="GO" id="GO:0060999">
    <property type="term" value="P:positive regulation of dendritic spine development"/>
    <property type="evidence" value="ECO:0000314"/>
    <property type="project" value="UniProtKB"/>
</dbReference>
<dbReference type="GO" id="GO:0051491">
    <property type="term" value="P:positive regulation of filopodium assembly"/>
    <property type="evidence" value="ECO:0000314"/>
    <property type="project" value="UniProtKB"/>
</dbReference>
<dbReference type="GO" id="GO:0008104">
    <property type="term" value="P:protein localization"/>
    <property type="evidence" value="ECO:0000314"/>
    <property type="project" value="MGI"/>
</dbReference>
<dbReference type="GO" id="GO:0072659">
    <property type="term" value="P:protein localization to plasma membrane"/>
    <property type="evidence" value="ECO:0000314"/>
    <property type="project" value="UniProtKB"/>
</dbReference>
<dbReference type="GO" id="GO:0008360">
    <property type="term" value="P:regulation of cell shape"/>
    <property type="evidence" value="ECO:0000314"/>
    <property type="project" value="MGI"/>
</dbReference>
<dbReference type="GO" id="GO:0060074">
    <property type="term" value="P:synapse maturation"/>
    <property type="evidence" value="ECO:0000314"/>
    <property type="project" value="UniProtKB"/>
</dbReference>
<dbReference type="InterPro" id="IPR004965">
    <property type="entry name" value="Paralemmin"/>
</dbReference>
<dbReference type="PANTHER" id="PTHR10498:SF6">
    <property type="entry name" value="PARALEMMIN-1"/>
    <property type="match status" value="1"/>
</dbReference>
<dbReference type="PANTHER" id="PTHR10498">
    <property type="entry name" value="PARALEMMIN-RELATED"/>
    <property type="match status" value="1"/>
</dbReference>
<dbReference type="Pfam" id="PF03285">
    <property type="entry name" value="Paralemmin"/>
    <property type="match status" value="1"/>
</dbReference>
<comment type="function">
    <text evidence="6">Involved in plasma membrane dynamics and cell process formation. Isoform 1 and isoform 2 are necessary for axonal and dendritic filopodia induction, for dendritic spine maturation and synapse formation in a palmitoylation-dependent manner.</text>
</comment>
<comment type="subunit">
    <text evidence="1">Interacts with dopamine receptor DRD3.</text>
</comment>
<comment type="subcellular location">
    <subcellularLocation>
        <location>Cell membrane</location>
        <topology>Lipid-anchor</topology>
        <orientation>Cytoplasmic side</orientation>
    </subcellularLocation>
    <subcellularLocation>
        <location>Cell projection</location>
        <location>Filopodium membrane</location>
        <topology>Lipid-anchor</topology>
    </subcellularLocation>
    <subcellularLocation>
        <location evidence="1">Cell projection</location>
        <location evidence="1">Axon</location>
    </subcellularLocation>
    <subcellularLocation>
        <location evidence="1">Cell projection</location>
        <location evidence="1">Dendrite</location>
    </subcellularLocation>
    <subcellularLocation>
        <location>Cell projection</location>
        <location>Dendritic spine</location>
    </subcellularLocation>
    <subcellularLocation>
        <location evidence="1">Basolateral cell membrane</location>
        <topology evidence="1">Lipid-anchor</topology>
    </subcellularLocation>
    <subcellularLocation>
        <location evidence="1">Apicolateral cell membrane</location>
        <topology evidence="1">Lipid-anchor</topology>
    </subcellularLocation>
    <text evidence="1">Translocation to the plasma membrane is enhanced upon stimulation of neuronal activity.</text>
</comment>
<comment type="alternative products">
    <event type="alternative splicing"/>
    <isoform>
        <id>Q9Z0P4-1</id>
        <name>1</name>
        <name>Paralemmin-L</name>
        <sequence type="displayed"/>
    </isoform>
    <isoform>
        <id>Q9Z0P4-2</id>
        <name>2</name>
        <name>Paralemmin-S</name>
        <sequence type="described" ref="VSP_003919"/>
    </isoform>
</comment>
<comment type="tissue specificity">
    <text evidence="7">Expression is highest in brain, intermediate in adrenal gland and kidney, and much lower or undetectable in other tissues. Isoform 1 is the predominant isoform in most tissues except brain and kidney where isoform 2 predominates.</text>
</comment>
<comment type="developmental stage">
    <text evidence="7">In brain, expression is highest in neonates and declines to approximately 50% in adults. Isoform 2 is the predominant isoform in neonates with isoform 1 being barely detectable at this stage. Levels of isoform 1 increase with age, with the most pronounced increase between postnatal days 10 and 20.</text>
</comment>
<comment type="miscellaneous">
    <molecule>Isoform 2</molecule>
    <text evidence="9">Mutagenesis of Cys-333, Cys-335 and Cys-336 to Ser inhibit filopodia and spines induction and synapse maturation.</text>
</comment>
<comment type="similarity">
    <text evidence="9">Belongs to the paralemmin family.</text>
</comment>
<accession>Q9Z0P4</accession>
<accession>Q9Z0P3</accession>
<reference key="1">
    <citation type="journal article" date="1998" name="J. Cell Biol.">
        <title>Paralemmin, a prenyl-palmitoyl-anchored phosphoprotein abundant in neurons and implicated in plasma membrane dynamics and cell process formation.</title>
        <authorList>
            <person name="Kutzleb C."/>
            <person name="Sanders G."/>
            <person name="Yamamoto R."/>
            <person name="Wang X."/>
            <person name="Lichte B."/>
            <person name="Petrasch-Parwez E."/>
            <person name="Kilimann M.W."/>
        </authorList>
    </citation>
    <scope>NUCLEOTIDE SEQUENCE [MRNA] (ISOFORMS 1 AND 2)</scope>
    <scope>SUBCELLULAR LOCATION</scope>
    <scope>TISSUE SPECIFICITY</scope>
    <scope>DEVELOPMENTAL STAGE</scope>
    <scope>PHOSPHORYLATION</scope>
    <source>
        <tissue>Brain</tissue>
    </source>
</reference>
<reference key="2">
    <citation type="submission" date="2009-01" db="UniProtKB">
        <authorList>
            <person name="Lubec G."/>
            <person name="Sunyer B."/>
            <person name="Chen W.-Q."/>
        </authorList>
    </citation>
    <scope>PROTEIN SEQUENCE OF 94-109 AND 325-337</scope>
    <scope>IDENTIFICATION BY MASS SPECTROMETRY</scope>
    <source>
        <strain>OF1</strain>
        <tissue>Hippocampus</tissue>
    </source>
</reference>
<reference key="3">
    <citation type="journal article" date="2004" name="Mol. Cell. Proteomics">
        <title>Phosphoproteomic analysis of the developing mouse brain.</title>
        <authorList>
            <person name="Ballif B.A."/>
            <person name="Villen J."/>
            <person name="Beausoleil S.A."/>
            <person name="Schwartz D."/>
            <person name="Gygi S.P."/>
        </authorList>
    </citation>
    <scope>PHOSPHORYLATION [LARGE SCALE ANALYSIS] AT THR-141; THR-145 AND SER-345</scope>
    <scope>IDENTIFICATION BY MASS SPECTROMETRY [LARGE SCALE ANALYSIS]</scope>
    <source>
        <tissue>Embryonic brain</tissue>
    </source>
</reference>
<reference key="4">
    <citation type="journal article" date="2007" name="Mol. Cell. Proteomics">
        <title>Qualitative and quantitative analyses of protein phosphorylation in naive and stimulated mouse synaptosomal preparations.</title>
        <authorList>
            <person name="Munton R.P."/>
            <person name="Tweedie-Cullen R."/>
            <person name="Livingstone-Zatchej M."/>
            <person name="Weinandy F."/>
            <person name="Waidelich M."/>
            <person name="Longo D."/>
            <person name="Gehrig P."/>
            <person name="Potthast F."/>
            <person name="Rutishauser D."/>
            <person name="Gerrits B."/>
            <person name="Panse C."/>
            <person name="Schlapbach R."/>
            <person name="Mansuy I.M."/>
        </authorList>
    </citation>
    <scope>IDENTIFICATION BY MASS SPECTROMETRY [LARGE SCALE ANALYSIS]</scope>
    <source>
        <tissue>Brain cortex</tissue>
    </source>
</reference>
<reference key="5">
    <citation type="journal article" date="2007" name="Proc. Natl. Acad. Sci. U.S.A.">
        <title>Large-scale phosphorylation analysis of mouse liver.</title>
        <authorList>
            <person name="Villen J."/>
            <person name="Beausoleil S.A."/>
            <person name="Gerber S.A."/>
            <person name="Gygi S.P."/>
        </authorList>
    </citation>
    <scope>PHOSPHORYLATION [LARGE SCALE ANALYSIS] AT THR-141 AND THR-145</scope>
    <scope>IDENTIFICATION BY MASS SPECTROMETRY [LARGE SCALE ANALYSIS]</scope>
    <source>
        <tissue>Liver</tissue>
    </source>
</reference>
<reference key="6">
    <citation type="journal article" date="2008" name="Mol. Biol. Cell">
        <title>Paralemmin-1, a modulator of filopodia induction is required for spine maturation.</title>
        <authorList>
            <person name="Arstikaitis P."/>
            <person name="Gauthier-Campbell C."/>
            <person name="Carolina Gutierrez Herrera R."/>
            <person name="Huang K."/>
            <person name="Levinson J.N."/>
            <person name="Murphy T.H."/>
            <person name="Kilimann M.W."/>
            <person name="Sala C."/>
            <person name="Colicos M.A."/>
            <person name="El-Husseini A."/>
        </authorList>
    </citation>
    <scope>FUNCTION</scope>
    <scope>MUTAGENESIS OF 377-CYS--CYS-380</scope>
    <scope>MUTAGENESIS (ISOFORM 2)</scope>
    <scope>SUBCELLULAR LOCATION</scope>
</reference>
<reference key="7">
    <citation type="journal article" date="2010" name="Cell">
        <title>A tissue-specific atlas of mouse protein phosphorylation and expression.</title>
        <authorList>
            <person name="Huttlin E.L."/>
            <person name="Jedrychowski M.P."/>
            <person name="Elias J.E."/>
            <person name="Goswami T."/>
            <person name="Rad R."/>
            <person name="Beausoleil S.A."/>
            <person name="Villen J."/>
            <person name="Haas W."/>
            <person name="Sowa M.E."/>
            <person name="Gygi S.P."/>
        </authorList>
    </citation>
    <scope>PHOSPHORYLATION [LARGE SCALE ANALYSIS] AT SER-124; THR-141; THR-145; THR-153; SER-157; SER-161; THR-242; SER-345; THR-361; THR-362; THR-363; SER-365 AND THR-367</scope>
    <scope>IDENTIFICATION BY MASS SPECTROMETRY [LARGE SCALE ANALYSIS]</scope>
    <source>
        <tissue>Brain</tissue>
        <tissue>Brown adipose tissue</tissue>
        <tissue>Heart</tissue>
        <tissue>Kidney</tissue>
        <tissue>Lung</tissue>
        <tissue>Spleen</tissue>
        <tissue>Testis</tissue>
    </source>
</reference>
<feature type="chain" id="PRO_0000058219" description="Paralemmin-1">
    <location>
        <begin position="1"/>
        <end position="380"/>
    </location>
</feature>
<feature type="propeptide" id="PRO_0000396690" description="Removed in mature form" evidence="4">
    <location>
        <begin position="381"/>
        <end position="383"/>
    </location>
</feature>
<feature type="region of interest" description="Disordered" evidence="5">
    <location>
        <begin position="51"/>
        <end position="163"/>
    </location>
</feature>
<feature type="region of interest" description="Disordered" evidence="5">
    <location>
        <begin position="242"/>
        <end position="295"/>
    </location>
</feature>
<feature type="region of interest" description="Disordered" evidence="5">
    <location>
        <begin position="334"/>
        <end position="375"/>
    </location>
</feature>
<feature type="coiled-coil region" evidence="4">
    <location>
        <begin position="5"/>
        <end position="102"/>
    </location>
</feature>
<feature type="compositionally biased region" description="Basic and acidic residues" evidence="5">
    <location>
        <begin position="69"/>
        <end position="96"/>
    </location>
</feature>
<feature type="compositionally biased region" description="Polar residues" evidence="5">
    <location>
        <begin position="109"/>
        <end position="124"/>
    </location>
</feature>
<feature type="compositionally biased region" description="Polar residues" evidence="5">
    <location>
        <begin position="133"/>
        <end position="143"/>
    </location>
</feature>
<feature type="compositionally biased region" description="Basic and acidic residues" evidence="5">
    <location>
        <begin position="257"/>
        <end position="273"/>
    </location>
</feature>
<feature type="compositionally biased region" description="Low complexity" evidence="5">
    <location>
        <begin position="285"/>
        <end position="295"/>
    </location>
</feature>
<feature type="compositionally biased region" description="Polar residues" evidence="5">
    <location>
        <begin position="357"/>
        <end position="367"/>
    </location>
</feature>
<feature type="modified residue" description="N-acetylmethionine" evidence="2">
    <location>
        <position position="1"/>
    </location>
</feature>
<feature type="modified residue" description="Phosphoserine" evidence="2">
    <location>
        <position position="116"/>
    </location>
</feature>
<feature type="modified residue" description="Phosphoserine" evidence="3">
    <location>
        <position position="122"/>
    </location>
</feature>
<feature type="modified residue" description="Phosphoserine" evidence="12">
    <location>
        <position position="124"/>
    </location>
</feature>
<feature type="modified residue" description="Phosphothreonine" evidence="10 11 12">
    <location>
        <position position="141"/>
    </location>
</feature>
<feature type="modified residue" description="Phosphothreonine" evidence="10 11 12">
    <location>
        <position position="145"/>
    </location>
</feature>
<feature type="modified residue" description="Phosphothreonine" evidence="12">
    <location>
        <position position="153"/>
    </location>
</feature>
<feature type="modified residue" description="Phosphoserine" evidence="12">
    <location>
        <position position="157"/>
    </location>
</feature>
<feature type="modified residue" description="Phosphoserine" evidence="12">
    <location>
        <position position="161"/>
    </location>
</feature>
<feature type="modified residue" description="Phosphothreonine" evidence="12">
    <location>
        <position position="242"/>
    </location>
</feature>
<feature type="modified residue" description="Phosphoserine" evidence="3">
    <location>
        <position position="244"/>
    </location>
</feature>
<feature type="modified residue" description="Phosphoserine" evidence="10 12">
    <location>
        <position position="345"/>
    </location>
</feature>
<feature type="modified residue" description="Phosphothreonine" evidence="12">
    <location>
        <position position="361"/>
    </location>
</feature>
<feature type="modified residue" description="Phosphothreonine" evidence="12">
    <location>
        <position position="362"/>
    </location>
</feature>
<feature type="modified residue" description="Phosphothreonine" evidence="12">
    <location>
        <position position="363"/>
    </location>
</feature>
<feature type="modified residue" description="Phosphoserine" evidence="12">
    <location>
        <position position="365"/>
    </location>
</feature>
<feature type="modified residue" description="Phosphothreonine" evidence="12">
    <location>
        <position position="367"/>
    </location>
</feature>
<feature type="modified residue" description="Cysteine methyl ester" evidence="4">
    <location>
        <position position="380"/>
    </location>
</feature>
<feature type="lipid moiety-binding region" description="S-palmitoyl cysteine" evidence="4">
    <location>
        <position position="377"/>
    </location>
</feature>
<feature type="lipid moiety-binding region" description="S-palmitoyl cysteine" evidence="4">
    <location>
        <position position="379"/>
    </location>
</feature>
<feature type="lipid moiety-binding region" description="S-farnesyl cysteine" evidence="4">
    <location>
        <position position="380"/>
    </location>
</feature>
<feature type="splice variant" id="VSP_003919" description="In isoform 2." evidence="8">
    <location>
        <begin position="167"/>
        <end position="210"/>
    </location>
</feature>
<feature type="mutagenesis site" description="Inhibits axonal and dendritic filopodia formation and reduces axonal and dendritic branching." evidence="6">
    <original>CRCC</original>
    <variation>SRSS</variation>
    <location>
        <begin position="377"/>
        <end position="380"/>
    </location>
</feature>
<name>PALM_MOUSE</name>
<organism>
    <name type="scientific">Mus musculus</name>
    <name type="common">Mouse</name>
    <dbReference type="NCBI Taxonomy" id="10090"/>
    <lineage>
        <taxon>Eukaryota</taxon>
        <taxon>Metazoa</taxon>
        <taxon>Chordata</taxon>
        <taxon>Craniata</taxon>
        <taxon>Vertebrata</taxon>
        <taxon>Euteleostomi</taxon>
        <taxon>Mammalia</taxon>
        <taxon>Eutheria</taxon>
        <taxon>Euarchontoglires</taxon>
        <taxon>Glires</taxon>
        <taxon>Rodentia</taxon>
        <taxon>Myomorpha</taxon>
        <taxon>Muroidea</taxon>
        <taxon>Muridae</taxon>
        <taxon>Murinae</taxon>
        <taxon>Mus</taxon>
        <taxon>Mus</taxon>
    </lineage>
</organism>
<keyword id="KW-0007">Acetylation</keyword>
<keyword id="KW-0025">Alternative splicing</keyword>
<keyword id="KW-1003">Cell membrane</keyword>
<keyword id="KW-0966">Cell projection</keyword>
<keyword id="KW-0133">Cell shape</keyword>
<keyword id="KW-0175">Coiled coil</keyword>
<keyword id="KW-0903">Direct protein sequencing</keyword>
<keyword id="KW-0449">Lipoprotein</keyword>
<keyword id="KW-0472">Membrane</keyword>
<keyword id="KW-0488">Methylation</keyword>
<keyword id="KW-0564">Palmitate</keyword>
<keyword id="KW-0597">Phosphoprotein</keyword>
<keyword id="KW-0636">Prenylation</keyword>
<keyword id="KW-1185">Reference proteome</keyword>
<keyword id="KW-0770">Synapse</keyword>
<sequence>MEVLATDTASQQERLQAIAEKRRKQAEIESKRRQLEDDRRQLQYLKSKALRERWLLEGTPSSASEGDEDMRKQMQEDEQKARGLEESITRLEKEIDVLEFGESAPAASKENSAAPSPGRPQSASPAKEEQKSETLVNAQQTPLGTPKENRTSTPVRSPGGSTMMKAAMYSVEITVEKDKVTGETRVLSSTTVLPRDPLPQGVKVYEDETKVVHAVDGIAENGIQPLSSSEVDELIHKADEVTLSEAGSTAGPAEPRGLAEDVTRTTPSRREITGVEAQPGEATSGPPGIQPGQEPPVTMVFMGYQNVEDEAETKKVLGLQDTIKAELVVIEDAATPREPAPLNGSAAELPATKEENQTGPTTTPSDTQDLDMKKPRCRCCSVM</sequence>
<proteinExistence type="evidence at protein level"/>
<gene>
    <name type="primary">Palm</name>
</gene>
<protein>
    <recommendedName>
        <fullName>Paralemmin-1</fullName>
    </recommendedName>
    <alternativeName>
        <fullName>Paralemmin</fullName>
    </alternativeName>
</protein>